<proteinExistence type="predicted"/>
<feature type="chain" id="PRO_0000068511" description="Uncharacterized 24.3 kDa protein">
    <location>
        <begin position="1"/>
        <end position="217"/>
    </location>
</feature>
<geneLocation type="plasmid">
    <name>IncFII R1</name>
</geneLocation>
<geneLocation type="plasmid">
    <name>IncFII R100</name>
    <name>NR1</name>
</geneLocation>
<protein>
    <recommendedName>
        <fullName>Uncharacterized 24.3 kDa protein</fullName>
    </recommendedName>
    <alternativeName>
        <fullName>URF 1</fullName>
    </alternativeName>
</protein>
<keyword id="KW-0614">Plasmid</keyword>
<sequence>MIQTRNQYLQFMLVMLAAWGISWGARFVMEQAVLLYGSGKNYLFFSHGTVLMYLLCVFLVYRRWIAPLPVVGQLRNVGVPWLVGAMAVVYVGVFLLGKALALPAEPFMTKLFADKSIPDVILTLLTIFILAPLNEETLFRGIMLNVFRSRYCWTMWLGALITSLLFVAAHSQYQNLLTLAELFLVGLITSVARIRSGGLLLPVLLHMEATTLGLLFG</sequence>
<name>YPRA_ECOLX</name>
<dbReference type="EMBL" id="X06240">
    <property type="protein sequence ID" value="CAA29583.1"/>
    <property type="molecule type" value="Genomic_DNA"/>
</dbReference>
<dbReference type="PIR" id="S01095">
    <property type="entry name" value="S01095"/>
</dbReference>
<dbReference type="RefSeq" id="NP_862961.1">
    <property type="nucleotide sequence ID" value="NC_004998.1"/>
</dbReference>
<dbReference type="RefSeq" id="NP_957645.1">
    <property type="nucleotide sequence ID" value="NC_005327.1"/>
</dbReference>
<dbReference type="RefSeq" id="WP_000616807.1">
    <property type="nucleotide sequence ID" value="NZ_WXZA01000057.1"/>
</dbReference>
<dbReference type="RefSeq" id="YP_001096513.1">
    <property type="nucleotide sequence ID" value="NC_009133.1"/>
</dbReference>
<dbReference type="RefSeq" id="YP_001816575.1">
    <property type="nucleotide sequence ID" value="NC_010558.1"/>
</dbReference>
<dbReference type="RefSeq" id="YP_002527569.1">
    <property type="nucleotide sequence ID" value="NC_011964.1"/>
</dbReference>
<dbReference type="RefSeq" id="YP_003108327.1">
    <property type="nucleotide sequence ID" value="NC_013122.1"/>
</dbReference>
<dbReference type="RefSeq" id="YP_003829174.1">
    <property type="nucleotide sequence ID" value="NC_014384.1"/>
</dbReference>
<dbReference type="RefSeq" id="YP_003829284.1">
    <property type="nucleotide sequence ID" value="NC_014385.1"/>
</dbReference>
<dbReference type="RefSeq" id="YP_006953465.1">
    <property type="nucleotide sequence ID" value="NC_019073.1"/>
</dbReference>
<dbReference type="RefSeq" id="YP_006954225.1">
    <property type="nucleotide sequence ID" value="NC_019095.1"/>
</dbReference>
<dbReference type="RefSeq" id="YP_007447503.1">
    <property type="nucleotide sequence ID" value="NC_020278.2"/>
</dbReference>
<dbReference type="RefSeq" id="YP_008826478.1">
    <property type="nucleotide sequence ID" value="NC_022885.1"/>
</dbReference>
<dbReference type="RefSeq" id="YP_009068664.1">
    <property type="nucleotide sequence ID" value="NC_025141.1"/>
</dbReference>
<dbReference type="OMA" id="GCAIMTS"/>
<dbReference type="GO" id="GO:0004175">
    <property type="term" value="F:endopeptidase activity"/>
    <property type="evidence" value="ECO:0007669"/>
    <property type="project" value="UniProtKB-ARBA"/>
</dbReference>
<dbReference type="GO" id="GO:0080120">
    <property type="term" value="P:CAAX-box protein maturation"/>
    <property type="evidence" value="ECO:0007669"/>
    <property type="project" value="UniProtKB-ARBA"/>
</dbReference>
<dbReference type="InterPro" id="IPR003675">
    <property type="entry name" value="Rce1/LyrA-like_dom"/>
</dbReference>
<dbReference type="Pfam" id="PF02517">
    <property type="entry name" value="Rce1-like"/>
    <property type="match status" value="1"/>
</dbReference>
<reference key="1">
    <citation type="journal article" date="1987" name="Mol. Gen. Genet.">
        <title>Identification of components of a new stability system of plasmid R1, ParD, that is close to the origin of replication of this plasmid.</title>
        <authorList>
            <person name="Bravo A."/>
            <person name="de Torrontegui G."/>
            <person name="Diaz R."/>
        </authorList>
    </citation>
    <scope>NUCLEOTIDE SEQUENCE [GENOMIC DNA]</scope>
    <source>
        <plasmid>IncFII R1</plasmid>
    </source>
</reference>
<reference key="2">
    <citation type="journal article" date="1993" name="J. Bacteriol.">
        <title>Insertion and deletion mutations in the repA4 region of the IncFII plasmid NR1 cause unstable inheritance.</title>
        <authorList>
            <person name="Jiang T."/>
            <person name="Min Y.-N."/>
            <person name="Liu W."/>
            <person name="Womble D.D."/>
            <person name="Rownd R.H."/>
        </authorList>
    </citation>
    <scope>NUCLEOTIDE SEQUENCE [GENOMIC DNA] OF 1-18</scope>
    <source>
        <plasmid>IncFII R100 (NR1)</plasmid>
    </source>
</reference>
<organism>
    <name type="scientific">Escherichia coli</name>
    <dbReference type="NCBI Taxonomy" id="562"/>
    <lineage>
        <taxon>Bacteria</taxon>
        <taxon>Pseudomonadati</taxon>
        <taxon>Pseudomonadota</taxon>
        <taxon>Gammaproteobacteria</taxon>
        <taxon>Enterobacterales</taxon>
        <taxon>Enterobacteriaceae</taxon>
        <taxon>Escherichia</taxon>
    </lineage>
</organism>
<accession>P13974</accession>